<protein>
    <recommendedName>
        <fullName evidence="2">SAR-endolysin</fullName>
        <ecNumber evidence="2">3.2.1.17</ecNumber>
    </recommendedName>
    <alternativeName>
        <fullName evidence="2">Endolysin</fullName>
    </alternativeName>
    <alternativeName>
        <fullName>Gene product 19</fullName>
        <shortName>gp19</shortName>
    </alternativeName>
    <alternativeName>
        <fullName evidence="2">Lysis protein</fullName>
    </alternativeName>
    <alternativeName>
        <fullName evidence="2">Lysozyme</fullName>
    </alternativeName>
    <alternativeName>
        <fullName evidence="2">Muramidase</fullName>
    </alternativeName>
</protein>
<reference key="1">
    <citation type="submission" date="1998-09" db="EMBL/GenBank/DDBJ databases">
        <title>Lysis gene modules in the phage P22 gene pool.</title>
        <authorList>
            <person name="Zimmer A."/>
            <person name="Schmieger H."/>
        </authorList>
    </citation>
    <scope>NUCLEOTIDE SEQUENCE [GENOMIC DNA]</scope>
</reference>
<organism>
    <name type="scientific">Bacteriophage PS119</name>
    <dbReference type="NCBI Taxonomy" id="83128"/>
    <lineage>
        <taxon>Viruses</taxon>
        <taxon>Duplodnaviria</taxon>
        <taxon>Heunggongvirae</taxon>
        <taxon>Uroviricota</taxon>
        <taxon>Caudoviricetes</taxon>
    </lineage>
</organism>
<dbReference type="EC" id="3.2.1.17" evidence="2"/>
<dbReference type="EMBL" id="AJ011581">
    <property type="protein sequence ID" value="CAA09710.1"/>
    <property type="molecule type" value="Genomic_DNA"/>
</dbReference>
<dbReference type="SMR" id="O80292"/>
<dbReference type="CAZy" id="GH24">
    <property type="family name" value="Glycoside Hydrolase Family 24"/>
</dbReference>
<dbReference type="GO" id="GO:0020002">
    <property type="term" value="C:host cell plasma membrane"/>
    <property type="evidence" value="ECO:0007669"/>
    <property type="project" value="UniProtKB-SubCell"/>
</dbReference>
<dbReference type="GO" id="GO:0016020">
    <property type="term" value="C:membrane"/>
    <property type="evidence" value="ECO:0007669"/>
    <property type="project" value="UniProtKB-KW"/>
</dbReference>
<dbReference type="GO" id="GO:0003796">
    <property type="term" value="F:lysozyme activity"/>
    <property type="evidence" value="ECO:0007669"/>
    <property type="project" value="UniProtKB-EC"/>
</dbReference>
<dbReference type="GO" id="GO:0016998">
    <property type="term" value="P:cell wall macromolecule catabolic process"/>
    <property type="evidence" value="ECO:0007669"/>
    <property type="project" value="InterPro"/>
</dbReference>
<dbReference type="GO" id="GO:0042742">
    <property type="term" value="P:defense response to bacterium"/>
    <property type="evidence" value="ECO:0007669"/>
    <property type="project" value="UniProtKB-KW"/>
</dbReference>
<dbReference type="GO" id="GO:0031640">
    <property type="term" value="P:killing of cells of another organism"/>
    <property type="evidence" value="ECO:0007669"/>
    <property type="project" value="UniProtKB-KW"/>
</dbReference>
<dbReference type="GO" id="GO:0009253">
    <property type="term" value="P:peptidoglycan catabolic process"/>
    <property type="evidence" value="ECO:0007669"/>
    <property type="project" value="InterPro"/>
</dbReference>
<dbReference type="CDD" id="cd16900">
    <property type="entry name" value="endolysin_R21-like"/>
    <property type="match status" value="1"/>
</dbReference>
<dbReference type="Gene3D" id="1.10.530.40">
    <property type="match status" value="1"/>
</dbReference>
<dbReference type="HAMAP" id="MF_04110">
    <property type="entry name" value="ENDOLYSIN_T4"/>
    <property type="match status" value="1"/>
</dbReference>
<dbReference type="HAMAP" id="MF_04136">
    <property type="entry name" value="SAR_ENDOLYSIN"/>
    <property type="match status" value="1"/>
</dbReference>
<dbReference type="InterPro" id="IPR051018">
    <property type="entry name" value="Bacteriophage_GH24"/>
</dbReference>
<dbReference type="InterPro" id="IPR034690">
    <property type="entry name" value="Endolysin_T4_type"/>
</dbReference>
<dbReference type="InterPro" id="IPR002196">
    <property type="entry name" value="Glyco_hydro_24"/>
</dbReference>
<dbReference type="InterPro" id="IPR023346">
    <property type="entry name" value="Lysozyme-like_dom_sf"/>
</dbReference>
<dbReference type="InterPro" id="IPR023347">
    <property type="entry name" value="Lysozyme_dom_sf"/>
</dbReference>
<dbReference type="InterPro" id="IPR043688">
    <property type="entry name" value="SAR_endolysin-like"/>
</dbReference>
<dbReference type="PANTHER" id="PTHR38107">
    <property type="match status" value="1"/>
</dbReference>
<dbReference type="PANTHER" id="PTHR38107:SF3">
    <property type="entry name" value="LYSOZYME RRRD-RELATED"/>
    <property type="match status" value="1"/>
</dbReference>
<dbReference type="Pfam" id="PF00959">
    <property type="entry name" value="Phage_lysozyme"/>
    <property type="match status" value="1"/>
</dbReference>
<dbReference type="SUPFAM" id="SSF53955">
    <property type="entry name" value="Lysozyme-like"/>
    <property type="match status" value="1"/>
</dbReference>
<gene>
    <name type="primary">19</name>
</gene>
<accession>O80292</accession>
<organismHost>
    <name type="scientific">Salmonella typhimurium</name>
    <dbReference type="NCBI Taxonomy" id="90371"/>
</organismHost>
<keyword id="KW-0929">Antimicrobial</keyword>
<keyword id="KW-0081">Bacteriolytic enzyme</keyword>
<keyword id="KW-0204">Cytolysis</keyword>
<keyword id="KW-0326">Glycosidase</keyword>
<keyword id="KW-1030">Host cell inner membrane</keyword>
<keyword id="KW-0578">Host cell lysis by virus</keyword>
<keyword id="KW-1032">Host cell membrane</keyword>
<keyword id="KW-1043">Host membrane</keyword>
<keyword id="KW-0378">Hydrolase</keyword>
<keyword id="KW-0472">Membrane</keyword>
<keyword id="KW-0735">Signal-anchor</keyword>
<keyword id="KW-0812">Transmembrane</keyword>
<keyword id="KW-1133">Transmembrane helix</keyword>
<keyword id="KW-1188">Viral release from host cell</keyword>
<proteinExistence type="inferred from homology"/>
<evidence type="ECO:0000255" key="1"/>
<evidence type="ECO:0000255" key="2">
    <source>
        <dbReference type="HAMAP-Rule" id="MF_04136"/>
    </source>
</evidence>
<comment type="function">
    <text evidence="2">Signal-arrest-release (SAR) endolysin with lysozyme activity that degrades host peptidoglycans and participates with the pinholin and spanin proteins in the sequential events which lead to programmed host cell lysis releasing the mature viral particles. Once the pinholin has permeabilized the host cell membrane, the SAR-endolysin is released into the periplasm where it breaks down the peptidoglycan layer.</text>
</comment>
<comment type="catalytic activity">
    <reaction evidence="2">
        <text>Hydrolysis of (1-&gt;4)-beta-linkages between N-acetylmuramic acid and N-acetyl-D-glucosamine residues in a peptidoglycan and between N-acetyl-D-glucosamine residues in chitodextrins.</text>
        <dbReference type="EC" id="3.2.1.17"/>
    </reaction>
</comment>
<comment type="subcellular location">
    <subcellularLocation>
        <location evidence="2">Host cell inner membrane</location>
        <topology evidence="2">Single-pass type II membrane protein</topology>
        <orientation evidence="2">Periplasmic side</orientation>
    </subcellularLocation>
    <text evidence="2">Secreted as a signal-anchored, membrane-tethered, inactive endolysin which is subsequently refolded, activated and released by membrane depolarization driven by the pinholin.</text>
</comment>
<comment type="domain">
    <text evidence="2">The signal-anchor, which may also be an uncleaved signal sequence tethers the SAR-endolysin to the membrane until the latter is depolarized by the holin, resulting in the escape of SAR-endolysin from the membrane.</text>
</comment>
<comment type="similarity">
    <text evidence="2">Belongs to the glycosyl hydrolase 24 family.</text>
</comment>
<feature type="chain" id="PRO_0000218105" description="SAR-endolysin">
    <location>
        <begin position="1"/>
        <end position="167"/>
    </location>
</feature>
<feature type="transmembrane region" description="Helical; Signal-anchor for type II membrane protein" evidence="1">
    <location>
        <begin position="10"/>
        <end position="32"/>
    </location>
</feature>
<feature type="active site" description="Proton donor/acceptor" evidence="2">
    <location>
        <position position="37"/>
    </location>
</feature>
<feature type="active site" description="Proton donor/acceptor" evidence="2">
    <location>
        <position position="46"/>
    </location>
</feature>
<sequence>MAMSPALRNSVMAAISGGAIAIASVLITGPGGNDGLEGVRYKPYKDVVGVLTVCYGHTGKDIMPGKTYTEAECKALLNKDLITVARQINPYIKVDIPETTRGALYSFVYNVGAGNFRTSTLLRKINQGDIKGACDQLRRWTYAGGKQWKGLMTRREVERDVCLWGKQ</sequence>
<name>ENLYS_BPPS1</name>